<sequence>MQTRPSSEPHRSRDQVTDGDRNRDQPQKCASATLAKKPVTPPAAPPPTPSNRVVAPLTVPVIQLTPAQSDSPVKLARPATPKETAISVPDHSNKENQPARTPPPSKSCPLGAPTNYVARRTWITTERMNELRRKAQEAAKQNKIFTIRGCFNSVRNALLMRGWVEKLDVHRKVMPAGQMTYEDLTQRLPKRKAGETRRQYVQKCERNIMSRFLEHMPVDFLWTNRKEKCDYIDQAKNPGMTINKFHRAPFTSKEGLCSQLRDFHWFFEEGTAEMYFPRCYNVWSPEELGEFIENFKLTACVAFLRAMLCKYHKQGSDAVFSCSGKIPYSAIDFAYKRLVEYIDSCQHNDIDFEDPPKIWEHDWDAFLFQHQQLVNEDGRIQHDGGQRLEPMVKSCLSLVDKMKVHWPQYSLDGYQNMWIVKPANKCRGRGIILMDNLKKILGVVNLSIASKSRYVVQKYIERPLILFQTKFDIRQWFLITNTQPLVVWFYRESYLRFSSQEYSLSNHHESVHLTNYAIQKKYTNGKRDKRLPSENMWDCYSFQAYLRQIGKYNMWLERIFPGMRKAIVGCMLASQENMDRRPNTFELFGADFMICENFYPWLIEINSSPDLGATTSVTARMCPQCLEDVVKVVIDRRTDPKAELGNFELAYRQVVPPTPAYMGLNLFVKGKQVLQKANHGGGHGHYYYQQQRKERSLATSSVYRQRSAIIHPATSISRIHRAMPTFNATEYMEKYMVEPLSSSRSSLCSQLPQKSPSAAPALTATPSGATSSYILKQAGRSITQLLSATHKRNTGGSLSGEQVQSTALPPKRQRSCGPRLSSTNPVESTEKKFKILIKNYSSNGNENMQDARPEVANSATATAISERKWRSLRNIAATAGGSSNLAARSKGPPLIAPPSLPTRRLTRTKSEIDSTGMHAIGRTFGRKSNGPRLPISISVQALHRGEPIVAALKQATSELQLSQAQMMSPRTALANKLNGSTLMVPASALPVG</sequence>
<protein>
    <recommendedName>
        <fullName>Tubulin glycylase 3A</fullName>
        <shortName>dmTTLL3A</shortName>
        <ecNumber>6.3.2.-</ecNumber>
    </recommendedName>
</protein>
<gene>
    <name type="primary">TTLL3A</name>
    <name type="ORF">CG11323</name>
</gene>
<dbReference type="EC" id="6.3.2.-"/>
<dbReference type="EMBL" id="AE014134">
    <property type="protein sequence ID" value="AAF52432.1"/>
    <property type="molecule type" value="Genomic_DNA"/>
</dbReference>
<dbReference type="RefSeq" id="NP_609069.1">
    <property type="nucleotide sequence ID" value="NM_135225.2"/>
</dbReference>
<dbReference type="SMR" id="Q9VM91"/>
<dbReference type="FunCoup" id="Q9VM91">
    <property type="interactions" value="39"/>
</dbReference>
<dbReference type="STRING" id="7227.FBpp0078935"/>
<dbReference type="GlyGen" id="Q9VM91">
    <property type="glycosylation" value="3 sites"/>
</dbReference>
<dbReference type="PaxDb" id="7227-FBpp0078935"/>
<dbReference type="EnsemblMetazoa" id="FBtr0079305">
    <property type="protein sequence ID" value="FBpp0078935"/>
    <property type="gene ID" value="FBgn0031854"/>
</dbReference>
<dbReference type="GeneID" id="33947"/>
<dbReference type="KEGG" id="dme:Dmel_CG11323"/>
<dbReference type="UCSC" id="CG11323-RA">
    <property type="organism name" value="d. melanogaster"/>
</dbReference>
<dbReference type="AGR" id="FB:FBgn0031854"/>
<dbReference type="CTD" id="33947"/>
<dbReference type="FlyBase" id="FBgn0031854">
    <property type="gene designation" value="TTLL3A"/>
</dbReference>
<dbReference type="VEuPathDB" id="VectorBase:FBgn0031854"/>
<dbReference type="eggNOG" id="KOG2157">
    <property type="taxonomic scope" value="Eukaryota"/>
</dbReference>
<dbReference type="GeneTree" id="ENSGT00940000168830"/>
<dbReference type="HOGENOM" id="CLU_294449_0_0_1"/>
<dbReference type="InParanoid" id="Q9VM91"/>
<dbReference type="OMA" id="PTPAYMG"/>
<dbReference type="OrthoDB" id="202825at2759"/>
<dbReference type="PhylomeDB" id="Q9VM91"/>
<dbReference type="BioGRID-ORCS" id="33947">
    <property type="hits" value="0 hits in 3 CRISPR screens"/>
</dbReference>
<dbReference type="GenomeRNAi" id="33947"/>
<dbReference type="PRO" id="PR:Q9VM91"/>
<dbReference type="Proteomes" id="UP000000803">
    <property type="component" value="Chromosome 2L"/>
</dbReference>
<dbReference type="GO" id="GO:0005930">
    <property type="term" value="C:axoneme"/>
    <property type="evidence" value="ECO:0000318"/>
    <property type="project" value="GO_Central"/>
</dbReference>
<dbReference type="GO" id="GO:0005874">
    <property type="term" value="C:microtubule"/>
    <property type="evidence" value="ECO:0007669"/>
    <property type="project" value="UniProtKB-KW"/>
</dbReference>
<dbReference type="GO" id="GO:0015630">
    <property type="term" value="C:microtubule cytoskeleton"/>
    <property type="evidence" value="ECO:0000314"/>
    <property type="project" value="UniProtKB"/>
</dbReference>
<dbReference type="GO" id="GO:0036126">
    <property type="term" value="C:sperm flagellum"/>
    <property type="evidence" value="ECO:0000318"/>
    <property type="project" value="GO_Central"/>
</dbReference>
<dbReference type="GO" id="GO:0005524">
    <property type="term" value="F:ATP binding"/>
    <property type="evidence" value="ECO:0007669"/>
    <property type="project" value="UniProtKB-KW"/>
</dbReference>
<dbReference type="GO" id="GO:0070735">
    <property type="term" value="F:protein-glycine ligase activity"/>
    <property type="evidence" value="ECO:0000314"/>
    <property type="project" value="UniProtKB"/>
</dbReference>
<dbReference type="GO" id="GO:0070737">
    <property type="term" value="F:protein-glycine ligase activity, elongating"/>
    <property type="evidence" value="ECO:0000314"/>
    <property type="project" value="UniProtKB"/>
</dbReference>
<dbReference type="GO" id="GO:0070736">
    <property type="term" value="F:protein-glycine ligase activity, initiating"/>
    <property type="evidence" value="ECO:0000314"/>
    <property type="project" value="UniProtKB"/>
</dbReference>
<dbReference type="GO" id="GO:0035082">
    <property type="term" value="P:axoneme assembly"/>
    <property type="evidence" value="ECO:0000318"/>
    <property type="project" value="GO_Central"/>
</dbReference>
<dbReference type="GO" id="GO:0030317">
    <property type="term" value="P:flagellated sperm motility"/>
    <property type="evidence" value="ECO:0000318"/>
    <property type="project" value="GO_Central"/>
</dbReference>
<dbReference type="GO" id="GO:0018094">
    <property type="term" value="P:protein polyglycylation"/>
    <property type="evidence" value="ECO:0000314"/>
    <property type="project" value="UniProtKB"/>
</dbReference>
<dbReference type="GO" id="GO:0007283">
    <property type="term" value="P:spermatogenesis"/>
    <property type="evidence" value="ECO:0000318"/>
    <property type="project" value="GO_Central"/>
</dbReference>
<dbReference type="FunFam" id="3.30.470.20:FF:000032">
    <property type="entry name" value="tubulin monoglycylase TTLL3 isoform X2"/>
    <property type="match status" value="1"/>
</dbReference>
<dbReference type="Gene3D" id="3.30.470.20">
    <property type="entry name" value="ATP-grasp fold, B domain"/>
    <property type="match status" value="1"/>
</dbReference>
<dbReference type="InterPro" id="IPR004344">
    <property type="entry name" value="TTL/TTLL_fam"/>
</dbReference>
<dbReference type="InterPro" id="IPR051437">
    <property type="entry name" value="TTLL_monoglycylase"/>
</dbReference>
<dbReference type="PANTHER" id="PTHR45870">
    <property type="entry name" value="TUBULIN MONOGLYCYLASE TTLL3"/>
    <property type="match status" value="1"/>
</dbReference>
<dbReference type="PANTHER" id="PTHR45870:SF2">
    <property type="entry name" value="TUBULIN MONOGLYCYLASE TTLL3"/>
    <property type="match status" value="1"/>
</dbReference>
<dbReference type="Pfam" id="PF03133">
    <property type="entry name" value="TTL"/>
    <property type="match status" value="1"/>
</dbReference>
<dbReference type="SUPFAM" id="SSF56059">
    <property type="entry name" value="Glutathione synthetase ATP-binding domain-like"/>
    <property type="match status" value="1"/>
</dbReference>
<dbReference type="PROSITE" id="PS51221">
    <property type="entry name" value="TTL"/>
    <property type="match status" value="1"/>
</dbReference>
<proteinExistence type="evidence at protein level"/>
<name>TTL3A_DROME</name>
<comment type="function">
    <text evidence="4">Polylycylase which modifies alpha- and beta-tubulin, generating side chains of glycine on the gamma-carboxyl groups of specific glutamate residues within the C-terminal tail of alpha- and beta-tubulin. Involved both in the side-chain initiation and elongation steps of the polyglycylation reaction by adding a single glycine chain to generate monoglycine side chains and by elongating monoglycine side chains to polyglycine side chains.</text>
</comment>
<comment type="subcellular location">
    <subcellularLocation>
        <location evidence="4">Cytoplasm</location>
        <location evidence="4">Cytoskeleton</location>
    </subcellularLocation>
</comment>
<feature type="chain" id="PRO_0000381795" description="Tubulin glycylase 3A">
    <location>
        <begin position="1"/>
        <end position="992"/>
    </location>
</feature>
<feature type="domain" description="TTL" evidence="2">
    <location>
        <begin position="295"/>
        <end position="645"/>
    </location>
</feature>
<feature type="region of interest" description="Disordered" evidence="3">
    <location>
        <begin position="1"/>
        <end position="54"/>
    </location>
</feature>
<feature type="region of interest" description="Disordered" evidence="3">
    <location>
        <begin position="68"/>
        <end position="113"/>
    </location>
</feature>
<feature type="region of interest" description="Disordered" evidence="3">
    <location>
        <begin position="746"/>
        <end position="766"/>
    </location>
</feature>
<feature type="region of interest" description="Disordered" evidence="3">
    <location>
        <begin position="791"/>
        <end position="828"/>
    </location>
</feature>
<feature type="compositionally biased region" description="Basic and acidic residues" evidence="3">
    <location>
        <begin position="7"/>
        <end position="26"/>
    </location>
</feature>
<feature type="compositionally biased region" description="Pro residues" evidence="3">
    <location>
        <begin position="39"/>
        <end position="49"/>
    </location>
</feature>
<feature type="compositionally biased region" description="Polar residues" evidence="3">
    <location>
        <begin position="794"/>
        <end position="807"/>
    </location>
</feature>
<feature type="binding site" evidence="1">
    <location>
        <begin position="457"/>
        <end position="460"/>
    </location>
    <ligand>
        <name>ATP</name>
        <dbReference type="ChEBI" id="CHEBI:30616"/>
    </ligand>
</feature>
<feature type="binding site" evidence="1">
    <location>
        <position position="470"/>
    </location>
    <ligand>
        <name>ATP</name>
        <dbReference type="ChEBI" id="CHEBI:30616"/>
    </ligand>
</feature>
<feature type="binding site" evidence="1">
    <location>
        <position position="472"/>
    </location>
    <ligand>
        <name>ATP</name>
        <dbReference type="ChEBI" id="CHEBI:30616"/>
    </ligand>
</feature>
<reference key="1">
    <citation type="journal article" date="2000" name="Science">
        <title>The genome sequence of Drosophila melanogaster.</title>
        <authorList>
            <person name="Adams M.D."/>
            <person name="Celniker S.E."/>
            <person name="Holt R.A."/>
            <person name="Evans C.A."/>
            <person name="Gocayne J.D."/>
            <person name="Amanatides P.G."/>
            <person name="Scherer S.E."/>
            <person name="Li P.W."/>
            <person name="Hoskins R.A."/>
            <person name="Galle R.F."/>
            <person name="George R.A."/>
            <person name="Lewis S.E."/>
            <person name="Richards S."/>
            <person name="Ashburner M."/>
            <person name="Henderson S.N."/>
            <person name="Sutton G.G."/>
            <person name="Wortman J.R."/>
            <person name="Yandell M.D."/>
            <person name="Zhang Q."/>
            <person name="Chen L.X."/>
            <person name="Brandon R.C."/>
            <person name="Rogers Y.-H.C."/>
            <person name="Blazej R.G."/>
            <person name="Champe M."/>
            <person name="Pfeiffer B.D."/>
            <person name="Wan K.H."/>
            <person name="Doyle C."/>
            <person name="Baxter E.G."/>
            <person name="Helt G."/>
            <person name="Nelson C.R."/>
            <person name="Miklos G.L.G."/>
            <person name="Abril J.F."/>
            <person name="Agbayani A."/>
            <person name="An H.-J."/>
            <person name="Andrews-Pfannkoch C."/>
            <person name="Baldwin D."/>
            <person name="Ballew R.M."/>
            <person name="Basu A."/>
            <person name="Baxendale J."/>
            <person name="Bayraktaroglu L."/>
            <person name="Beasley E.M."/>
            <person name="Beeson K.Y."/>
            <person name="Benos P.V."/>
            <person name="Berman B.P."/>
            <person name="Bhandari D."/>
            <person name="Bolshakov S."/>
            <person name="Borkova D."/>
            <person name="Botchan M.R."/>
            <person name="Bouck J."/>
            <person name="Brokstein P."/>
            <person name="Brottier P."/>
            <person name="Burtis K.C."/>
            <person name="Busam D.A."/>
            <person name="Butler H."/>
            <person name="Cadieu E."/>
            <person name="Center A."/>
            <person name="Chandra I."/>
            <person name="Cherry J.M."/>
            <person name="Cawley S."/>
            <person name="Dahlke C."/>
            <person name="Davenport L.B."/>
            <person name="Davies P."/>
            <person name="de Pablos B."/>
            <person name="Delcher A."/>
            <person name="Deng Z."/>
            <person name="Mays A.D."/>
            <person name="Dew I."/>
            <person name="Dietz S.M."/>
            <person name="Dodson K."/>
            <person name="Doup L.E."/>
            <person name="Downes M."/>
            <person name="Dugan-Rocha S."/>
            <person name="Dunkov B.C."/>
            <person name="Dunn P."/>
            <person name="Durbin K.J."/>
            <person name="Evangelista C.C."/>
            <person name="Ferraz C."/>
            <person name="Ferriera S."/>
            <person name="Fleischmann W."/>
            <person name="Fosler C."/>
            <person name="Gabrielian A.E."/>
            <person name="Garg N.S."/>
            <person name="Gelbart W.M."/>
            <person name="Glasser K."/>
            <person name="Glodek A."/>
            <person name="Gong F."/>
            <person name="Gorrell J.H."/>
            <person name="Gu Z."/>
            <person name="Guan P."/>
            <person name="Harris M."/>
            <person name="Harris N.L."/>
            <person name="Harvey D.A."/>
            <person name="Heiman T.J."/>
            <person name="Hernandez J.R."/>
            <person name="Houck J."/>
            <person name="Hostin D."/>
            <person name="Houston K.A."/>
            <person name="Howland T.J."/>
            <person name="Wei M.-H."/>
            <person name="Ibegwam C."/>
            <person name="Jalali M."/>
            <person name="Kalush F."/>
            <person name="Karpen G.H."/>
            <person name="Ke Z."/>
            <person name="Kennison J.A."/>
            <person name="Ketchum K.A."/>
            <person name="Kimmel B.E."/>
            <person name="Kodira C.D."/>
            <person name="Kraft C.L."/>
            <person name="Kravitz S."/>
            <person name="Kulp D."/>
            <person name="Lai Z."/>
            <person name="Lasko P."/>
            <person name="Lei Y."/>
            <person name="Levitsky A.A."/>
            <person name="Li J.H."/>
            <person name="Li Z."/>
            <person name="Liang Y."/>
            <person name="Lin X."/>
            <person name="Liu X."/>
            <person name="Mattei B."/>
            <person name="McIntosh T.C."/>
            <person name="McLeod M.P."/>
            <person name="McPherson D."/>
            <person name="Merkulov G."/>
            <person name="Milshina N.V."/>
            <person name="Mobarry C."/>
            <person name="Morris J."/>
            <person name="Moshrefi A."/>
            <person name="Mount S.M."/>
            <person name="Moy M."/>
            <person name="Murphy B."/>
            <person name="Murphy L."/>
            <person name="Muzny D.M."/>
            <person name="Nelson D.L."/>
            <person name="Nelson D.R."/>
            <person name="Nelson K.A."/>
            <person name="Nixon K."/>
            <person name="Nusskern D.R."/>
            <person name="Pacleb J.M."/>
            <person name="Palazzolo M."/>
            <person name="Pittman G.S."/>
            <person name="Pan S."/>
            <person name="Pollard J."/>
            <person name="Puri V."/>
            <person name="Reese M.G."/>
            <person name="Reinert K."/>
            <person name="Remington K."/>
            <person name="Saunders R.D.C."/>
            <person name="Scheeler F."/>
            <person name="Shen H."/>
            <person name="Shue B.C."/>
            <person name="Siden-Kiamos I."/>
            <person name="Simpson M."/>
            <person name="Skupski M.P."/>
            <person name="Smith T.J."/>
            <person name="Spier E."/>
            <person name="Spradling A.C."/>
            <person name="Stapleton M."/>
            <person name="Strong R."/>
            <person name="Sun E."/>
            <person name="Svirskas R."/>
            <person name="Tector C."/>
            <person name="Turner R."/>
            <person name="Venter E."/>
            <person name="Wang A.H."/>
            <person name="Wang X."/>
            <person name="Wang Z.-Y."/>
            <person name="Wassarman D.A."/>
            <person name="Weinstock G.M."/>
            <person name="Weissenbach J."/>
            <person name="Williams S.M."/>
            <person name="Woodage T."/>
            <person name="Worley K.C."/>
            <person name="Wu D."/>
            <person name="Yang S."/>
            <person name="Yao Q.A."/>
            <person name="Ye J."/>
            <person name="Yeh R.-F."/>
            <person name="Zaveri J.S."/>
            <person name="Zhan M."/>
            <person name="Zhang G."/>
            <person name="Zhao Q."/>
            <person name="Zheng L."/>
            <person name="Zheng X.H."/>
            <person name="Zhong F.N."/>
            <person name="Zhong W."/>
            <person name="Zhou X."/>
            <person name="Zhu S.C."/>
            <person name="Zhu X."/>
            <person name="Smith H.O."/>
            <person name="Gibbs R.A."/>
            <person name="Myers E.W."/>
            <person name="Rubin G.M."/>
            <person name="Venter J.C."/>
        </authorList>
    </citation>
    <scope>NUCLEOTIDE SEQUENCE [LARGE SCALE GENOMIC DNA]</scope>
    <source>
        <strain>Berkeley</strain>
    </source>
</reference>
<reference key="2">
    <citation type="journal article" date="2002" name="Genome Biol.">
        <title>Annotation of the Drosophila melanogaster euchromatic genome: a systematic review.</title>
        <authorList>
            <person name="Misra S."/>
            <person name="Crosby M.A."/>
            <person name="Mungall C.J."/>
            <person name="Matthews B.B."/>
            <person name="Campbell K.S."/>
            <person name="Hradecky P."/>
            <person name="Huang Y."/>
            <person name="Kaminker J.S."/>
            <person name="Millburn G.H."/>
            <person name="Prochnik S.E."/>
            <person name="Smith C.D."/>
            <person name="Tupy J.L."/>
            <person name="Whitfield E.J."/>
            <person name="Bayraktaroglu L."/>
            <person name="Berman B.P."/>
            <person name="Bettencourt B.R."/>
            <person name="Celniker S.E."/>
            <person name="de Grey A.D.N.J."/>
            <person name="Drysdale R.A."/>
            <person name="Harris N.L."/>
            <person name="Richter J."/>
            <person name="Russo S."/>
            <person name="Schroeder A.J."/>
            <person name="Shu S.Q."/>
            <person name="Stapleton M."/>
            <person name="Yamada C."/>
            <person name="Ashburner M."/>
            <person name="Gelbart W.M."/>
            <person name="Rubin G.M."/>
            <person name="Lewis S.E."/>
        </authorList>
    </citation>
    <scope>GENOME REANNOTATION</scope>
    <source>
        <strain>Berkeley</strain>
    </source>
</reference>
<reference key="3">
    <citation type="journal article" date="2009" name="Cell">
        <title>Evolutionary divergence of enzymatic mechanisms for posttranslational polyglycylation.</title>
        <authorList>
            <person name="Rogowski K."/>
            <person name="Juge F."/>
            <person name="van Dijk J."/>
            <person name="Wloga D."/>
            <person name="Strub J.-M."/>
            <person name="Levilliers N."/>
            <person name="Thomas D."/>
            <person name="Bre M.-H."/>
            <person name="Van Dorsselaer A."/>
            <person name="Gaertig J."/>
            <person name="Janke C."/>
        </authorList>
    </citation>
    <scope>FUNCTION</scope>
    <scope>CATALYTIC ACTIVITY</scope>
    <scope>SUBCELLULAR LOCATION</scope>
</reference>
<evidence type="ECO:0000250" key="1">
    <source>
        <dbReference type="UniProtKB" id="Q6ZT98"/>
    </source>
</evidence>
<evidence type="ECO:0000255" key="2">
    <source>
        <dbReference type="PROSITE-ProRule" id="PRU00568"/>
    </source>
</evidence>
<evidence type="ECO:0000256" key="3">
    <source>
        <dbReference type="SAM" id="MobiDB-lite"/>
    </source>
</evidence>
<evidence type="ECO:0000269" key="4">
    <source>
    </source>
</evidence>
<keyword id="KW-0067">ATP-binding</keyword>
<keyword id="KW-0963">Cytoplasm</keyword>
<keyword id="KW-0206">Cytoskeleton</keyword>
<keyword id="KW-0436">Ligase</keyword>
<keyword id="KW-0493">Microtubule</keyword>
<keyword id="KW-0547">Nucleotide-binding</keyword>
<keyword id="KW-1185">Reference proteome</keyword>
<accession>Q9VM91</accession>
<organism>
    <name type="scientific">Drosophila melanogaster</name>
    <name type="common">Fruit fly</name>
    <dbReference type="NCBI Taxonomy" id="7227"/>
    <lineage>
        <taxon>Eukaryota</taxon>
        <taxon>Metazoa</taxon>
        <taxon>Ecdysozoa</taxon>
        <taxon>Arthropoda</taxon>
        <taxon>Hexapoda</taxon>
        <taxon>Insecta</taxon>
        <taxon>Pterygota</taxon>
        <taxon>Neoptera</taxon>
        <taxon>Endopterygota</taxon>
        <taxon>Diptera</taxon>
        <taxon>Brachycera</taxon>
        <taxon>Muscomorpha</taxon>
        <taxon>Ephydroidea</taxon>
        <taxon>Drosophilidae</taxon>
        <taxon>Drosophila</taxon>
        <taxon>Sophophora</taxon>
    </lineage>
</organism>